<organism>
    <name type="scientific">Archaeoglobus fulgidus (strain ATCC 49558 / DSM 4304 / JCM 9628 / NBRC 100126 / VC-16)</name>
    <dbReference type="NCBI Taxonomy" id="224325"/>
    <lineage>
        <taxon>Archaea</taxon>
        <taxon>Methanobacteriati</taxon>
        <taxon>Methanobacteriota</taxon>
        <taxon>Archaeoglobi</taxon>
        <taxon>Archaeoglobales</taxon>
        <taxon>Archaeoglobaceae</taxon>
        <taxon>Archaeoglobus</taxon>
    </lineage>
</organism>
<gene>
    <name evidence="1" type="primary">rpl19e</name>
    <name type="ordered locus">AF_1907</name>
</gene>
<reference key="1">
    <citation type="journal article" date="1997" name="Nature">
        <title>The complete genome sequence of the hyperthermophilic, sulphate-reducing archaeon Archaeoglobus fulgidus.</title>
        <authorList>
            <person name="Klenk H.-P."/>
            <person name="Clayton R.A."/>
            <person name="Tomb J.-F."/>
            <person name="White O."/>
            <person name="Nelson K.E."/>
            <person name="Ketchum K.A."/>
            <person name="Dodson R.J."/>
            <person name="Gwinn M.L."/>
            <person name="Hickey E.K."/>
            <person name="Peterson J.D."/>
            <person name="Richardson D.L."/>
            <person name="Kerlavage A.R."/>
            <person name="Graham D.E."/>
            <person name="Kyrpides N.C."/>
            <person name="Fleischmann R.D."/>
            <person name="Quackenbush J."/>
            <person name="Lee N.H."/>
            <person name="Sutton G.G."/>
            <person name="Gill S.R."/>
            <person name="Kirkness E.F."/>
            <person name="Dougherty B.A."/>
            <person name="McKenney K."/>
            <person name="Adams M.D."/>
            <person name="Loftus B.J."/>
            <person name="Peterson S.N."/>
            <person name="Reich C.I."/>
            <person name="McNeil L.K."/>
            <person name="Badger J.H."/>
            <person name="Glodek A."/>
            <person name="Zhou L."/>
            <person name="Overbeek R."/>
            <person name="Gocayne J.D."/>
            <person name="Weidman J.F."/>
            <person name="McDonald L.A."/>
            <person name="Utterback T.R."/>
            <person name="Cotton M.D."/>
            <person name="Spriggs T."/>
            <person name="Artiach P."/>
            <person name="Kaine B.P."/>
            <person name="Sykes S.M."/>
            <person name="Sadow P.W."/>
            <person name="D'Andrea K.P."/>
            <person name="Bowman C."/>
            <person name="Fujii C."/>
            <person name="Garland S.A."/>
            <person name="Mason T.M."/>
            <person name="Olsen G.J."/>
            <person name="Fraser C.M."/>
            <person name="Smith H.O."/>
            <person name="Woese C.R."/>
            <person name="Venter J.C."/>
        </authorList>
    </citation>
    <scope>NUCLEOTIDE SEQUENCE [LARGE SCALE GENOMIC DNA]</scope>
    <source>
        <strain>ATCC 49558 / DSM 4304 / JCM 9628 / NBRC 100126 / VC-16</strain>
    </source>
</reference>
<protein>
    <recommendedName>
        <fullName evidence="1">Large ribosomal subunit protein eL19</fullName>
    </recommendedName>
    <alternativeName>
        <fullName evidence="3">50S ribosomal protein L19e</fullName>
    </alternativeName>
</protein>
<sequence length="149" mass="17392">MMVMDLSLQRRLAASVLKCGENRVWFDPAALEDIATAATKQDIRELIEQGVIKRKPVNGVSRARINKRKLQKRKGRRRGHGSRKGAKGARMPRKRMWILRIRALRKALRQMKAEGVVDRRTYRILYRKAKGGEFRSVAHLKIYVEQMKR</sequence>
<evidence type="ECO:0000255" key="1">
    <source>
        <dbReference type="HAMAP-Rule" id="MF_01475"/>
    </source>
</evidence>
<evidence type="ECO:0000256" key="2">
    <source>
        <dbReference type="SAM" id="MobiDB-lite"/>
    </source>
</evidence>
<evidence type="ECO:0000305" key="3"/>
<accession>O28372</accession>
<comment type="function">
    <text evidence="1">Binds to the 23S rRNA.</text>
</comment>
<comment type="subunit">
    <text evidence="1">Part of the 50S ribosomal subunit.</text>
</comment>
<comment type="similarity">
    <text evidence="1">Belongs to the eukaryotic ribosomal protein eL19 family.</text>
</comment>
<dbReference type="EMBL" id="AE000782">
    <property type="protein sequence ID" value="AAB89342.1"/>
    <property type="molecule type" value="Genomic_DNA"/>
</dbReference>
<dbReference type="PIR" id="B69488">
    <property type="entry name" value="B69488"/>
</dbReference>
<dbReference type="SMR" id="O28372"/>
<dbReference type="STRING" id="224325.AF_1907"/>
<dbReference type="PaxDb" id="224325-AF_1907"/>
<dbReference type="EnsemblBacteria" id="AAB89342">
    <property type="protein sequence ID" value="AAB89342"/>
    <property type="gene ID" value="AF_1907"/>
</dbReference>
<dbReference type="KEGG" id="afu:AF_1907"/>
<dbReference type="eggNOG" id="arCOG04089">
    <property type="taxonomic scope" value="Archaea"/>
</dbReference>
<dbReference type="HOGENOM" id="CLU_083919_1_1_2"/>
<dbReference type="PhylomeDB" id="O28372"/>
<dbReference type="Proteomes" id="UP000002199">
    <property type="component" value="Chromosome"/>
</dbReference>
<dbReference type="GO" id="GO:0022625">
    <property type="term" value="C:cytosolic large ribosomal subunit"/>
    <property type="evidence" value="ECO:0007669"/>
    <property type="project" value="InterPro"/>
</dbReference>
<dbReference type="GO" id="GO:0070180">
    <property type="term" value="F:large ribosomal subunit rRNA binding"/>
    <property type="evidence" value="ECO:0007669"/>
    <property type="project" value="UniProtKB-UniRule"/>
</dbReference>
<dbReference type="GO" id="GO:0003735">
    <property type="term" value="F:structural constituent of ribosome"/>
    <property type="evidence" value="ECO:0007669"/>
    <property type="project" value="InterPro"/>
</dbReference>
<dbReference type="GO" id="GO:0006412">
    <property type="term" value="P:translation"/>
    <property type="evidence" value="ECO:0007669"/>
    <property type="project" value="UniProtKB-UniRule"/>
</dbReference>
<dbReference type="CDD" id="cd00481">
    <property type="entry name" value="Ribosomal_L19e"/>
    <property type="match status" value="1"/>
</dbReference>
<dbReference type="FunFam" id="1.10.1200.240:FF:000003">
    <property type="entry name" value="50S ribosomal protein L19e"/>
    <property type="match status" value="1"/>
</dbReference>
<dbReference type="FunFam" id="1.10.1650.10:FF:000001">
    <property type="entry name" value="Ribosomal protein L19"/>
    <property type="match status" value="1"/>
</dbReference>
<dbReference type="Gene3D" id="1.10.1200.240">
    <property type="match status" value="1"/>
</dbReference>
<dbReference type="Gene3D" id="1.10.1650.10">
    <property type="match status" value="1"/>
</dbReference>
<dbReference type="HAMAP" id="MF_01475">
    <property type="entry name" value="Ribosomal_eL19"/>
    <property type="match status" value="1"/>
</dbReference>
<dbReference type="InterPro" id="IPR035970">
    <property type="entry name" value="60S_ribosomal_eL19_sf"/>
</dbReference>
<dbReference type="InterPro" id="IPR039547">
    <property type="entry name" value="Ribosomal_eL19"/>
</dbReference>
<dbReference type="InterPro" id="IPR023638">
    <property type="entry name" value="Ribosomal_eL19_CS"/>
</dbReference>
<dbReference type="InterPro" id="IPR000196">
    <property type="entry name" value="Ribosomal_eL19_dom"/>
</dbReference>
<dbReference type="InterPro" id="IPR015972">
    <property type="entry name" value="Ribosomal_eL19_dom1"/>
</dbReference>
<dbReference type="NCBIfam" id="NF006343">
    <property type="entry name" value="PRK08570.1"/>
    <property type="match status" value="1"/>
</dbReference>
<dbReference type="PANTHER" id="PTHR10722">
    <property type="entry name" value="60S RIBOSOMAL PROTEIN L19"/>
    <property type="match status" value="1"/>
</dbReference>
<dbReference type="Pfam" id="PF01280">
    <property type="entry name" value="Ribosomal_L19e"/>
    <property type="match status" value="1"/>
</dbReference>
<dbReference type="Pfam" id="PF25476">
    <property type="entry name" value="Ribosomal_L19e_C"/>
    <property type="match status" value="1"/>
</dbReference>
<dbReference type="SMART" id="SM01416">
    <property type="entry name" value="Ribosomal_L19e"/>
    <property type="match status" value="1"/>
</dbReference>
<dbReference type="SUPFAM" id="SSF48140">
    <property type="entry name" value="Ribosomal protein L19 (L19e)"/>
    <property type="match status" value="1"/>
</dbReference>
<dbReference type="PROSITE" id="PS00526">
    <property type="entry name" value="RIBOSOMAL_L19E"/>
    <property type="match status" value="1"/>
</dbReference>
<feature type="chain" id="PRO_0000131186" description="Large ribosomal subunit protein eL19">
    <location>
        <begin position="1"/>
        <end position="149"/>
    </location>
</feature>
<feature type="region of interest" description="Disordered" evidence="2">
    <location>
        <begin position="67"/>
        <end position="90"/>
    </location>
</feature>
<name>RL19E_ARCFU</name>
<keyword id="KW-1185">Reference proteome</keyword>
<keyword id="KW-0687">Ribonucleoprotein</keyword>
<keyword id="KW-0689">Ribosomal protein</keyword>
<keyword id="KW-0694">RNA-binding</keyword>
<keyword id="KW-0699">rRNA-binding</keyword>
<proteinExistence type="inferred from homology"/>